<gene>
    <name evidence="1" type="primary">glmU</name>
    <name type="ordered locus">FTF0387</name>
</gene>
<feature type="chain" id="PRO_0000263131" description="Bifunctional protein GlmU">
    <location>
        <begin position="1"/>
        <end position="455"/>
    </location>
</feature>
<feature type="region of interest" description="Pyrophosphorylase" evidence="1">
    <location>
        <begin position="1"/>
        <end position="226"/>
    </location>
</feature>
<feature type="region of interest" description="Linker" evidence="1">
    <location>
        <begin position="227"/>
        <end position="247"/>
    </location>
</feature>
<feature type="region of interest" description="N-acetyltransferase" evidence="1">
    <location>
        <begin position="248"/>
        <end position="455"/>
    </location>
</feature>
<feature type="active site" description="Proton acceptor" evidence="1">
    <location>
        <position position="360"/>
    </location>
</feature>
<feature type="binding site" evidence="1">
    <location>
        <begin position="8"/>
        <end position="11"/>
    </location>
    <ligand>
        <name>UDP-N-acetyl-alpha-D-glucosamine</name>
        <dbReference type="ChEBI" id="CHEBI:57705"/>
    </ligand>
</feature>
<feature type="binding site" evidence="1">
    <location>
        <position position="22"/>
    </location>
    <ligand>
        <name>UDP-N-acetyl-alpha-D-glucosamine</name>
        <dbReference type="ChEBI" id="CHEBI:57705"/>
    </ligand>
</feature>
<feature type="binding site" evidence="1">
    <location>
        <position position="73"/>
    </location>
    <ligand>
        <name>UDP-N-acetyl-alpha-D-glucosamine</name>
        <dbReference type="ChEBI" id="CHEBI:57705"/>
    </ligand>
</feature>
<feature type="binding site" evidence="1">
    <location>
        <begin position="78"/>
        <end position="79"/>
    </location>
    <ligand>
        <name>UDP-N-acetyl-alpha-D-glucosamine</name>
        <dbReference type="ChEBI" id="CHEBI:57705"/>
    </ligand>
</feature>
<feature type="binding site" evidence="1">
    <location>
        <begin position="99"/>
        <end position="101"/>
    </location>
    <ligand>
        <name>UDP-N-acetyl-alpha-D-glucosamine</name>
        <dbReference type="ChEBI" id="CHEBI:57705"/>
    </ligand>
</feature>
<feature type="binding site" evidence="1">
    <location>
        <position position="101"/>
    </location>
    <ligand>
        <name>Mg(2+)</name>
        <dbReference type="ChEBI" id="CHEBI:18420"/>
    </ligand>
</feature>
<feature type="binding site" evidence="1">
    <location>
        <position position="136"/>
    </location>
    <ligand>
        <name>UDP-N-acetyl-alpha-D-glucosamine</name>
        <dbReference type="ChEBI" id="CHEBI:57705"/>
    </ligand>
</feature>
<feature type="binding site" evidence="1">
    <location>
        <position position="151"/>
    </location>
    <ligand>
        <name>UDP-N-acetyl-alpha-D-glucosamine</name>
        <dbReference type="ChEBI" id="CHEBI:57705"/>
    </ligand>
</feature>
<feature type="binding site" evidence="1">
    <location>
        <position position="166"/>
    </location>
    <ligand>
        <name>UDP-N-acetyl-alpha-D-glucosamine</name>
        <dbReference type="ChEBI" id="CHEBI:57705"/>
    </ligand>
</feature>
<feature type="binding site" evidence="1">
    <location>
        <position position="224"/>
    </location>
    <ligand>
        <name>Mg(2+)</name>
        <dbReference type="ChEBI" id="CHEBI:18420"/>
    </ligand>
</feature>
<feature type="binding site" evidence="1">
    <location>
        <position position="224"/>
    </location>
    <ligand>
        <name>UDP-N-acetyl-alpha-D-glucosamine</name>
        <dbReference type="ChEBI" id="CHEBI:57705"/>
    </ligand>
</feature>
<feature type="binding site" evidence="1">
    <location>
        <position position="330"/>
    </location>
    <ligand>
        <name>UDP-N-acetyl-alpha-D-glucosamine</name>
        <dbReference type="ChEBI" id="CHEBI:57705"/>
    </ligand>
</feature>
<feature type="binding site" evidence="1">
    <location>
        <position position="348"/>
    </location>
    <ligand>
        <name>UDP-N-acetyl-alpha-D-glucosamine</name>
        <dbReference type="ChEBI" id="CHEBI:57705"/>
    </ligand>
</feature>
<feature type="binding site" evidence="1">
    <location>
        <position position="363"/>
    </location>
    <ligand>
        <name>UDP-N-acetyl-alpha-D-glucosamine</name>
        <dbReference type="ChEBI" id="CHEBI:57705"/>
    </ligand>
</feature>
<feature type="binding site" evidence="1">
    <location>
        <position position="374"/>
    </location>
    <ligand>
        <name>UDP-N-acetyl-alpha-D-glucosamine</name>
        <dbReference type="ChEBI" id="CHEBI:57705"/>
    </ligand>
</feature>
<feature type="binding site" evidence="1">
    <location>
        <position position="377"/>
    </location>
    <ligand>
        <name>acetyl-CoA</name>
        <dbReference type="ChEBI" id="CHEBI:57288"/>
    </ligand>
</feature>
<feature type="binding site" evidence="1">
    <location>
        <begin position="383"/>
        <end position="384"/>
    </location>
    <ligand>
        <name>acetyl-CoA</name>
        <dbReference type="ChEBI" id="CHEBI:57288"/>
    </ligand>
</feature>
<feature type="binding site" evidence="1">
    <location>
        <position position="402"/>
    </location>
    <ligand>
        <name>acetyl-CoA</name>
        <dbReference type="ChEBI" id="CHEBI:57288"/>
    </ligand>
</feature>
<feature type="binding site" evidence="1">
    <location>
        <position position="420"/>
    </location>
    <ligand>
        <name>acetyl-CoA</name>
        <dbReference type="ChEBI" id="CHEBI:57288"/>
    </ligand>
</feature>
<feature type="binding site" evidence="1">
    <location>
        <position position="437"/>
    </location>
    <ligand>
        <name>acetyl-CoA</name>
        <dbReference type="ChEBI" id="CHEBI:57288"/>
    </ligand>
</feature>
<organism>
    <name type="scientific">Francisella tularensis subsp. tularensis (strain FSC 198)</name>
    <dbReference type="NCBI Taxonomy" id="393115"/>
    <lineage>
        <taxon>Bacteria</taxon>
        <taxon>Pseudomonadati</taxon>
        <taxon>Pseudomonadota</taxon>
        <taxon>Gammaproteobacteria</taxon>
        <taxon>Thiotrichales</taxon>
        <taxon>Francisellaceae</taxon>
        <taxon>Francisella</taxon>
    </lineage>
</organism>
<comment type="function">
    <text evidence="1">Catalyzes the last two sequential reactions in the de novo biosynthetic pathway for UDP-N-acetylglucosamine (UDP-GlcNAc). The C-terminal domain catalyzes the transfer of acetyl group from acetyl coenzyme A to glucosamine-1-phosphate (GlcN-1-P) to produce N-acetylglucosamine-1-phosphate (GlcNAc-1-P), which is converted into UDP-GlcNAc by the transfer of uridine 5-monophosphate (from uridine 5-triphosphate), a reaction catalyzed by the N-terminal domain.</text>
</comment>
<comment type="catalytic activity">
    <reaction evidence="1">
        <text>alpha-D-glucosamine 1-phosphate + acetyl-CoA = N-acetyl-alpha-D-glucosamine 1-phosphate + CoA + H(+)</text>
        <dbReference type="Rhea" id="RHEA:13725"/>
        <dbReference type="ChEBI" id="CHEBI:15378"/>
        <dbReference type="ChEBI" id="CHEBI:57287"/>
        <dbReference type="ChEBI" id="CHEBI:57288"/>
        <dbReference type="ChEBI" id="CHEBI:57776"/>
        <dbReference type="ChEBI" id="CHEBI:58516"/>
        <dbReference type="EC" id="2.3.1.157"/>
    </reaction>
</comment>
<comment type="catalytic activity">
    <reaction evidence="1">
        <text>N-acetyl-alpha-D-glucosamine 1-phosphate + UTP + H(+) = UDP-N-acetyl-alpha-D-glucosamine + diphosphate</text>
        <dbReference type="Rhea" id="RHEA:13509"/>
        <dbReference type="ChEBI" id="CHEBI:15378"/>
        <dbReference type="ChEBI" id="CHEBI:33019"/>
        <dbReference type="ChEBI" id="CHEBI:46398"/>
        <dbReference type="ChEBI" id="CHEBI:57705"/>
        <dbReference type="ChEBI" id="CHEBI:57776"/>
        <dbReference type="EC" id="2.7.7.23"/>
    </reaction>
</comment>
<comment type="cofactor">
    <cofactor evidence="1">
        <name>Mg(2+)</name>
        <dbReference type="ChEBI" id="CHEBI:18420"/>
    </cofactor>
    <text evidence="1">Binds 1 Mg(2+) ion per subunit.</text>
</comment>
<comment type="pathway">
    <text evidence="1">Nucleotide-sugar biosynthesis; UDP-N-acetyl-alpha-D-glucosamine biosynthesis; N-acetyl-alpha-D-glucosamine 1-phosphate from alpha-D-glucosamine 6-phosphate (route II): step 2/2.</text>
</comment>
<comment type="pathway">
    <text evidence="1">Nucleotide-sugar biosynthesis; UDP-N-acetyl-alpha-D-glucosamine biosynthesis; UDP-N-acetyl-alpha-D-glucosamine from N-acetyl-alpha-D-glucosamine 1-phosphate: step 1/1.</text>
</comment>
<comment type="pathway">
    <text evidence="1">Bacterial outer membrane biogenesis; LPS lipid A biosynthesis.</text>
</comment>
<comment type="subunit">
    <text evidence="1">Homotrimer.</text>
</comment>
<comment type="subcellular location">
    <subcellularLocation>
        <location evidence="1">Cytoplasm</location>
    </subcellularLocation>
</comment>
<comment type="similarity">
    <text evidence="1">In the N-terminal section; belongs to the N-acetylglucosamine-1-phosphate uridyltransferase family.</text>
</comment>
<comment type="similarity">
    <text evidence="1">In the C-terminal section; belongs to the transferase hexapeptide repeat family.</text>
</comment>
<dbReference type="EC" id="2.7.7.23" evidence="1"/>
<dbReference type="EC" id="2.3.1.157" evidence="1"/>
<dbReference type="EMBL" id="AM286280">
    <property type="protein sequence ID" value="CAL08403.1"/>
    <property type="molecule type" value="Genomic_DNA"/>
</dbReference>
<dbReference type="RefSeq" id="WP_011579037.1">
    <property type="nucleotide sequence ID" value="NC_008245.1"/>
</dbReference>
<dbReference type="SMR" id="Q14J62"/>
<dbReference type="KEGG" id="ftf:FTF0387"/>
<dbReference type="HOGENOM" id="CLU_029499_15_2_6"/>
<dbReference type="UniPathway" id="UPA00113">
    <property type="reaction ID" value="UER00532"/>
</dbReference>
<dbReference type="UniPathway" id="UPA00113">
    <property type="reaction ID" value="UER00533"/>
</dbReference>
<dbReference type="UniPathway" id="UPA00973"/>
<dbReference type="GO" id="GO:0005737">
    <property type="term" value="C:cytoplasm"/>
    <property type="evidence" value="ECO:0007669"/>
    <property type="project" value="UniProtKB-SubCell"/>
</dbReference>
<dbReference type="GO" id="GO:0016020">
    <property type="term" value="C:membrane"/>
    <property type="evidence" value="ECO:0007669"/>
    <property type="project" value="GOC"/>
</dbReference>
<dbReference type="GO" id="GO:0019134">
    <property type="term" value="F:glucosamine-1-phosphate N-acetyltransferase activity"/>
    <property type="evidence" value="ECO:0007669"/>
    <property type="project" value="UniProtKB-UniRule"/>
</dbReference>
<dbReference type="GO" id="GO:0000287">
    <property type="term" value="F:magnesium ion binding"/>
    <property type="evidence" value="ECO:0007669"/>
    <property type="project" value="UniProtKB-UniRule"/>
</dbReference>
<dbReference type="GO" id="GO:0003977">
    <property type="term" value="F:UDP-N-acetylglucosamine diphosphorylase activity"/>
    <property type="evidence" value="ECO:0007669"/>
    <property type="project" value="UniProtKB-UniRule"/>
</dbReference>
<dbReference type="GO" id="GO:0000902">
    <property type="term" value="P:cell morphogenesis"/>
    <property type="evidence" value="ECO:0007669"/>
    <property type="project" value="UniProtKB-UniRule"/>
</dbReference>
<dbReference type="GO" id="GO:0071555">
    <property type="term" value="P:cell wall organization"/>
    <property type="evidence" value="ECO:0007669"/>
    <property type="project" value="UniProtKB-KW"/>
</dbReference>
<dbReference type="GO" id="GO:0009245">
    <property type="term" value="P:lipid A biosynthetic process"/>
    <property type="evidence" value="ECO:0007669"/>
    <property type="project" value="UniProtKB-UniRule"/>
</dbReference>
<dbReference type="GO" id="GO:0009252">
    <property type="term" value="P:peptidoglycan biosynthetic process"/>
    <property type="evidence" value="ECO:0007669"/>
    <property type="project" value="UniProtKB-UniRule"/>
</dbReference>
<dbReference type="GO" id="GO:0008360">
    <property type="term" value="P:regulation of cell shape"/>
    <property type="evidence" value="ECO:0007669"/>
    <property type="project" value="UniProtKB-KW"/>
</dbReference>
<dbReference type="GO" id="GO:0006048">
    <property type="term" value="P:UDP-N-acetylglucosamine biosynthetic process"/>
    <property type="evidence" value="ECO:0007669"/>
    <property type="project" value="UniProtKB-UniPathway"/>
</dbReference>
<dbReference type="CDD" id="cd02540">
    <property type="entry name" value="GT2_GlmU_N_bac"/>
    <property type="match status" value="1"/>
</dbReference>
<dbReference type="CDD" id="cd03353">
    <property type="entry name" value="LbH_GlmU_C"/>
    <property type="match status" value="1"/>
</dbReference>
<dbReference type="Gene3D" id="2.160.10.10">
    <property type="entry name" value="Hexapeptide repeat proteins"/>
    <property type="match status" value="1"/>
</dbReference>
<dbReference type="Gene3D" id="3.90.550.10">
    <property type="entry name" value="Spore Coat Polysaccharide Biosynthesis Protein SpsA, Chain A"/>
    <property type="match status" value="1"/>
</dbReference>
<dbReference type="HAMAP" id="MF_01631">
    <property type="entry name" value="GlmU"/>
    <property type="match status" value="1"/>
</dbReference>
<dbReference type="InterPro" id="IPR005882">
    <property type="entry name" value="Bifunctional_GlmU"/>
</dbReference>
<dbReference type="InterPro" id="IPR050065">
    <property type="entry name" value="GlmU-like"/>
</dbReference>
<dbReference type="InterPro" id="IPR038009">
    <property type="entry name" value="GlmU_C_LbH"/>
</dbReference>
<dbReference type="InterPro" id="IPR001451">
    <property type="entry name" value="Hexapep"/>
</dbReference>
<dbReference type="InterPro" id="IPR018357">
    <property type="entry name" value="Hexapep_transf_CS"/>
</dbReference>
<dbReference type="InterPro" id="IPR025877">
    <property type="entry name" value="MobA-like_NTP_Trfase"/>
</dbReference>
<dbReference type="InterPro" id="IPR029044">
    <property type="entry name" value="Nucleotide-diphossugar_trans"/>
</dbReference>
<dbReference type="InterPro" id="IPR011004">
    <property type="entry name" value="Trimer_LpxA-like_sf"/>
</dbReference>
<dbReference type="NCBIfam" id="TIGR01173">
    <property type="entry name" value="glmU"/>
    <property type="match status" value="1"/>
</dbReference>
<dbReference type="PANTHER" id="PTHR43584:SF3">
    <property type="entry name" value="BIFUNCTIONAL PROTEIN GLMU"/>
    <property type="match status" value="1"/>
</dbReference>
<dbReference type="PANTHER" id="PTHR43584">
    <property type="entry name" value="NUCLEOTIDYL TRANSFERASE"/>
    <property type="match status" value="1"/>
</dbReference>
<dbReference type="Pfam" id="PF00132">
    <property type="entry name" value="Hexapep"/>
    <property type="match status" value="2"/>
</dbReference>
<dbReference type="Pfam" id="PF12804">
    <property type="entry name" value="NTP_transf_3"/>
    <property type="match status" value="1"/>
</dbReference>
<dbReference type="SUPFAM" id="SSF53448">
    <property type="entry name" value="Nucleotide-diphospho-sugar transferases"/>
    <property type="match status" value="1"/>
</dbReference>
<dbReference type="SUPFAM" id="SSF51161">
    <property type="entry name" value="Trimeric LpxA-like enzymes"/>
    <property type="match status" value="1"/>
</dbReference>
<dbReference type="PROSITE" id="PS00101">
    <property type="entry name" value="HEXAPEP_TRANSFERASES"/>
    <property type="match status" value="1"/>
</dbReference>
<accession>Q14J62</accession>
<reference key="1">
    <citation type="journal article" date="2007" name="PLoS ONE">
        <title>Genome sequencing shows that European isolates of Francisella tularensis subspecies tularensis are almost identical to US laboratory strain Schu S4.</title>
        <authorList>
            <person name="Chaudhuri R.R."/>
            <person name="Ren C.-P."/>
            <person name="Desmond L."/>
            <person name="Vincent G.A."/>
            <person name="Silman N.J."/>
            <person name="Brehm J.K."/>
            <person name="Elmore M.J."/>
            <person name="Hudson M.J."/>
            <person name="Forsman M."/>
            <person name="Isherwood K.E."/>
            <person name="Gurycova D."/>
            <person name="Minton N.P."/>
            <person name="Titball R.W."/>
            <person name="Pallen M.J."/>
            <person name="Vipond R."/>
        </authorList>
    </citation>
    <scope>NUCLEOTIDE SEQUENCE [LARGE SCALE GENOMIC DNA]</scope>
    <source>
        <strain>FSC 198</strain>
    </source>
</reference>
<sequence length="455" mass="49684">MGLSVVILAAGKGSRMNSNKPKVLQTLAAKTLIEHVVSSVEKLNPDNIVVVTGHLKEQVEDALQGRNITFVYQQQQLGTGHAVLQALPYLKEQKVLILYGDVPLISTEVLENLVDTTNDDDLGVLTAFVENPQGLGRIVRDKFGAVTEIVEEKDANDIQRQIKEINTGIYCVHKNLLQKWLPEIKANNVQKEYYLTDIITFAKADHVSINVTHPINEFEILGVNDRTQLASLERVWQRNVAEKIMAKGVSIADPNRFDVRGNLDVGKDCWIDINVIIKGNVKLGNNVVIGANCILKNCIIEDNVRIKSNSMVDGSIIREGAIVGPFARVRPECDVKEGAVIGNFVEAKKTILGKGSKASHLTYLGDSEIGANCNIGAGVITCNYDGVNKHKTVIGDYAFIGSDSQLIAPVNIGQGATVGAGSTIVKDVPADNLVISRARQRHIDTWQRSVKKTDK</sequence>
<evidence type="ECO:0000255" key="1">
    <source>
        <dbReference type="HAMAP-Rule" id="MF_01631"/>
    </source>
</evidence>
<keyword id="KW-0012">Acyltransferase</keyword>
<keyword id="KW-0133">Cell shape</keyword>
<keyword id="KW-0961">Cell wall biogenesis/degradation</keyword>
<keyword id="KW-0963">Cytoplasm</keyword>
<keyword id="KW-0460">Magnesium</keyword>
<keyword id="KW-0479">Metal-binding</keyword>
<keyword id="KW-0511">Multifunctional enzyme</keyword>
<keyword id="KW-0548">Nucleotidyltransferase</keyword>
<keyword id="KW-0573">Peptidoglycan synthesis</keyword>
<keyword id="KW-0677">Repeat</keyword>
<keyword id="KW-0808">Transferase</keyword>
<name>GLMU_FRAT1</name>
<protein>
    <recommendedName>
        <fullName evidence="1">Bifunctional protein GlmU</fullName>
    </recommendedName>
    <domain>
        <recommendedName>
            <fullName evidence="1">UDP-N-acetylglucosamine pyrophosphorylase</fullName>
            <ecNumber evidence="1">2.7.7.23</ecNumber>
        </recommendedName>
        <alternativeName>
            <fullName evidence="1">N-acetylglucosamine-1-phosphate uridyltransferase</fullName>
        </alternativeName>
    </domain>
    <domain>
        <recommendedName>
            <fullName evidence="1">Glucosamine-1-phosphate N-acetyltransferase</fullName>
            <ecNumber evidence="1">2.3.1.157</ecNumber>
        </recommendedName>
    </domain>
</protein>
<proteinExistence type="inferred from homology"/>